<protein>
    <recommendedName>
        <fullName evidence="1">tRNA sulfurtransferase</fullName>
        <ecNumber evidence="1">2.8.1.4</ecNumber>
    </recommendedName>
    <alternativeName>
        <fullName evidence="1">Sulfur carrier protein ThiS sulfurtransferase</fullName>
    </alternativeName>
    <alternativeName>
        <fullName evidence="1">Thiamine biosynthesis protein ThiI</fullName>
    </alternativeName>
    <alternativeName>
        <fullName evidence="1">tRNA 4-thiouridine synthase</fullName>
    </alternativeName>
</protein>
<sequence>MRFVVRLFPEISIKSAPVRKRWTKMLTDNLRLMAKRIHPTARVNKEWDRIEVTAKVDDPVVEGQLIDMLARTPGIANFSHVQTHPFESLHDIYELVQASWGDQLKGKTFCVRVKRTGNHDFTSTEVERYVGGGLNQNNPTGGVKLKDPDVSIGLEVKDDQVYLVTKKYQGLGGFPMGTQESVLSLISGGYDSTVASFQMIKRGLRTHYCFFNLGGREHELAVKEIAFFLWNRFGSTHRVRFISVPFEGVVGEILQKVGPSNMGVVLKRMMLRAGERIAERGGIEAMVTGEAVAQVSSQTIPNLSVIDSVTDMMVLRPLIVMDKRDIIDISRKIGAEEFSAAVPEYCGVISVKPSAKVNRAKLEAEEEKFDFSILEHALENAVVQSIDEVMDDAQELAEVELVSELPVSAKVIDIRHHTEQELRPLTVEGREVLEIPFYQLSTAYAELDKAVNYYLFCDKGVMSGLHARHLLDAGYTNVGVYRP</sequence>
<reference key="1">
    <citation type="journal article" date="2008" name="PLoS Genet.">
        <title>Complete genome sequence of the complex carbohydrate-degrading marine bacterium, Saccharophagus degradans strain 2-40 T.</title>
        <authorList>
            <person name="Weiner R.M."/>
            <person name="Taylor L.E. II"/>
            <person name="Henrissat B."/>
            <person name="Hauser L."/>
            <person name="Land M."/>
            <person name="Coutinho P.M."/>
            <person name="Rancurel C."/>
            <person name="Saunders E.H."/>
            <person name="Longmire A.G."/>
            <person name="Zhang H."/>
            <person name="Bayer E.A."/>
            <person name="Gilbert H.J."/>
            <person name="Larimer F."/>
            <person name="Zhulin I.B."/>
            <person name="Ekborg N.A."/>
            <person name="Lamed R."/>
            <person name="Richardson P.M."/>
            <person name="Borovok I."/>
            <person name="Hutcheson S."/>
        </authorList>
    </citation>
    <scope>NUCLEOTIDE SEQUENCE [LARGE SCALE GENOMIC DNA]</scope>
    <source>
        <strain>2-40 / ATCC 43961 / DSM 17024</strain>
    </source>
</reference>
<gene>
    <name evidence="1" type="primary">thiI</name>
    <name type="ordered locus">Sde_0503</name>
</gene>
<accession>Q21NG2</accession>
<comment type="function">
    <text evidence="1">Catalyzes the ATP-dependent transfer of a sulfur to tRNA to produce 4-thiouridine in position 8 of tRNAs, which functions as a near-UV photosensor. Also catalyzes the transfer of sulfur to the sulfur carrier protein ThiS, forming ThiS-thiocarboxylate. This is a step in the synthesis of thiazole, in the thiamine biosynthesis pathway. The sulfur is donated as persulfide by IscS.</text>
</comment>
<comment type="catalytic activity">
    <reaction evidence="1">
        <text>[ThiI sulfur-carrier protein]-S-sulfanyl-L-cysteine + a uridine in tRNA + 2 reduced [2Fe-2S]-[ferredoxin] + ATP + H(+) = [ThiI sulfur-carrier protein]-L-cysteine + a 4-thiouridine in tRNA + 2 oxidized [2Fe-2S]-[ferredoxin] + AMP + diphosphate</text>
        <dbReference type="Rhea" id="RHEA:24176"/>
        <dbReference type="Rhea" id="RHEA-COMP:10000"/>
        <dbReference type="Rhea" id="RHEA-COMP:10001"/>
        <dbReference type="Rhea" id="RHEA-COMP:13337"/>
        <dbReference type="Rhea" id="RHEA-COMP:13338"/>
        <dbReference type="Rhea" id="RHEA-COMP:13339"/>
        <dbReference type="Rhea" id="RHEA-COMP:13340"/>
        <dbReference type="ChEBI" id="CHEBI:15378"/>
        <dbReference type="ChEBI" id="CHEBI:29950"/>
        <dbReference type="ChEBI" id="CHEBI:30616"/>
        <dbReference type="ChEBI" id="CHEBI:33019"/>
        <dbReference type="ChEBI" id="CHEBI:33737"/>
        <dbReference type="ChEBI" id="CHEBI:33738"/>
        <dbReference type="ChEBI" id="CHEBI:61963"/>
        <dbReference type="ChEBI" id="CHEBI:65315"/>
        <dbReference type="ChEBI" id="CHEBI:136798"/>
        <dbReference type="ChEBI" id="CHEBI:456215"/>
        <dbReference type="EC" id="2.8.1.4"/>
    </reaction>
</comment>
<comment type="catalytic activity">
    <reaction evidence="1">
        <text>[ThiS sulfur-carrier protein]-C-terminal Gly-Gly-AMP + S-sulfanyl-L-cysteinyl-[cysteine desulfurase] + AH2 = [ThiS sulfur-carrier protein]-C-terminal-Gly-aminoethanethioate + L-cysteinyl-[cysteine desulfurase] + A + AMP + 2 H(+)</text>
        <dbReference type="Rhea" id="RHEA:43340"/>
        <dbReference type="Rhea" id="RHEA-COMP:12157"/>
        <dbReference type="Rhea" id="RHEA-COMP:12158"/>
        <dbReference type="Rhea" id="RHEA-COMP:12910"/>
        <dbReference type="Rhea" id="RHEA-COMP:19908"/>
        <dbReference type="ChEBI" id="CHEBI:13193"/>
        <dbReference type="ChEBI" id="CHEBI:15378"/>
        <dbReference type="ChEBI" id="CHEBI:17499"/>
        <dbReference type="ChEBI" id="CHEBI:29950"/>
        <dbReference type="ChEBI" id="CHEBI:61963"/>
        <dbReference type="ChEBI" id="CHEBI:90618"/>
        <dbReference type="ChEBI" id="CHEBI:232372"/>
        <dbReference type="ChEBI" id="CHEBI:456215"/>
    </reaction>
</comment>
<comment type="pathway">
    <text evidence="1">Cofactor biosynthesis; thiamine diphosphate biosynthesis.</text>
</comment>
<comment type="subcellular location">
    <subcellularLocation>
        <location evidence="1">Cytoplasm</location>
    </subcellularLocation>
</comment>
<comment type="similarity">
    <text evidence="1">Belongs to the ThiI family.</text>
</comment>
<proteinExistence type="inferred from homology"/>
<dbReference type="EC" id="2.8.1.4" evidence="1"/>
<dbReference type="EMBL" id="CP000282">
    <property type="protein sequence ID" value="ABD79767.1"/>
    <property type="molecule type" value="Genomic_DNA"/>
</dbReference>
<dbReference type="RefSeq" id="WP_011466988.1">
    <property type="nucleotide sequence ID" value="NC_007912.1"/>
</dbReference>
<dbReference type="SMR" id="Q21NG2"/>
<dbReference type="STRING" id="203122.Sde_0503"/>
<dbReference type="GeneID" id="98612203"/>
<dbReference type="KEGG" id="sde:Sde_0503"/>
<dbReference type="eggNOG" id="COG0301">
    <property type="taxonomic scope" value="Bacteria"/>
</dbReference>
<dbReference type="eggNOG" id="COG0607">
    <property type="taxonomic scope" value="Bacteria"/>
</dbReference>
<dbReference type="HOGENOM" id="CLU_037952_4_1_6"/>
<dbReference type="OrthoDB" id="9773948at2"/>
<dbReference type="UniPathway" id="UPA00060"/>
<dbReference type="Proteomes" id="UP000001947">
    <property type="component" value="Chromosome"/>
</dbReference>
<dbReference type="GO" id="GO:0005829">
    <property type="term" value="C:cytosol"/>
    <property type="evidence" value="ECO:0007669"/>
    <property type="project" value="TreeGrafter"/>
</dbReference>
<dbReference type="GO" id="GO:0005524">
    <property type="term" value="F:ATP binding"/>
    <property type="evidence" value="ECO:0007669"/>
    <property type="project" value="UniProtKB-UniRule"/>
</dbReference>
<dbReference type="GO" id="GO:0004810">
    <property type="term" value="F:CCA tRNA nucleotidyltransferase activity"/>
    <property type="evidence" value="ECO:0007669"/>
    <property type="project" value="InterPro"/>
</dbReference>
<dbReference type="GO" id="GO:0000049">
    <property type="term" value="F:tRNA binding"/>
    <property type="evidence" value="ECO:0007669"/>
    <property type="project" value="UniProtKB-UniRule"/>
</dbReference>
<dbReference type="GO" id="GO:0140741">
    <property type="term" value="F:tRNA-uracil-4 sulfurtransferase activity"/>
    <property type="evidence" value="ECO:0007669"/>
    <property type="project" value="UniProtKB-EC"/>
</dbReference>
<dbReference type="GO" id="GO:0009228">
    <property type="term" value="P:thiamine biosynthetic process"/>
    <property type="evidence" value="ECO:0007669"/>
    <property type="project" value="UniProtKB-KW"/>
</dbReference>
<dbReference type="GO" id="GO:0009229">
    <property type="term" value="P:thiamine diphosphate biosynthetic process"/>
    <property type="evidence" value="ECO:0007669"/>
    <property type="project" value="UniProtKB-UniRule"/>
</dbReference>
<dbReference type="GO" id="GO:0052837">
    <property type="term" value="P:thiazole biosynthetic process"/>
    <property type="evidence" value="ECO:0007669"/>
    <property type="project" value="InterPro"/>
</dbReference>
<dbReference type="GO" id="GO:0002937">
    <property type="term" value="P:tRNA 4-thiouridine biosynthesis"/>
    <property type="evidence" value="ECO:0007669"/>
    <property type="project" value="TreeGrafter"/>
</dbReference>
<dbReference type="CDD" id="cd01712">
    <property type="entry name" value="PPase_ThiI"/>
    <property type="match status" value="1"/>
</dbReference>
<dbReference type="CDD" id="cd00158">
    <property type="entry name" value="RHOD"/>
    <property type="match status" value="1"/>
</dbReference>
<dbReference type="CDD" id="cd11716">
    <property type="entry name" value="THUMP_ThiI"/>
    <property type="match status" value="1"/>
</dbReference>
<dbReference type="Gene3D" id="3.30.2130.30">
    <property type="match status" value="1"/>
</dbReference>
<dbReference type="Gene3D" id="3.40.50.620">
    <property type="entry name" value="HUPs"/>
    <property type="match status" value="1"/>
</dbReference>
<dbReference type="Gene3D" id="3.40.250.10">
    <property type="entry name" value="Rhodanese-like domain"/>
    <property type="match status" value="1"/>
</dbReference>
<dbReference type="HAMAP" id="MF_00021">
    <property type="entry name" value="ThiI"/>
    <property type="match status" value="1"/>
</dbReference>
<dbReference type="InterPro" id="IPR001763">
    <property type="entry name" value="Rhodanese-like_dom"/>
</dbReference>
<dbReference type="InterPro" id="IPR036873">
    <property type="entry name" value="Rhodanese-like_dom_sf"/>
</dbReference>
<dbReference type="InterPro" id="IPR014729">
    <property type="entry name" value="Rossmann-like_a/b/a_fold"/>
</dbReference>
<dbReference type="InterPro" id="IPR020536">
    <property type="entry name" value="ThiI_AANH"/>
</dbReference>
<dbReference type="InterPro" id="IPR054173">
    <property type="entry name" value="ThiI_fer"/>
</dbReference>
<dbReference type="InterPro" id="IPR049961">
    <property type="entry name" value="ThiI_N"/>
</dbReference>
<dbReference type="InterPro" id="IPR026340">
    <property type="entry name" value="THII_Thiazole_biosynth_dom"/>
</dbReference>
<dbReference type="InterPro" id="IPR004114">
    <property type="entry name" value="THUMP_dom"/>
</dbReference>
<dbReference type="InterPro" id="IPR049962">
    <property type="entry name" value="THUMP_ThiI"/>
</dbReference>
<dbReference type="InterPro" id="IPR003720">
    <property type="entry name" value="tRNA_STrfase"/>
</dbReference>
<dbReference type="InterPro" id="IPR050102">
    <property type="entry name" value="tRNA_sulfurtransferase_ThiI"/>
</dbReference>
<dbReference type="NCBIfam" id="TIGR04271">
    <property type="entry name" value="ThiI_C_thiazole"/>
    <property type="match status" value="1"/>
</dbReference>
<dbReference type="NCBIfam" id="TIGR00342">
    <property type="entry name" value="tRNA uracil 4-sulfurtransferase ThiI"/>
    <property type="match status" value="1"/>
</dbReference>
<dbReference type="PANTHER" id="PTHR43209">
    <property type="entry name" value="TRNA SULFURTRANSFERASE"/>
    <property type="match status" value="1"/>
</dbReference>
<dbReference type="PANTHER" id="PTHR43209:SF1">
    <property type="entry name" value="TRNA SULFURTRANSFERASE"/>
    <property type="match status" value="1"/>
</dbReference>
<dbReference type="Pfam" id="PF02568">
    <property type="entry name" value="ThiI"/>
    <property type="match status" value="1"/>
</dbReference>
<dbReference type="Pfam" id="PF22025">
    <property type="entry name" value="ThiI_fer"/>
    <property type="match status" value="1"/>
</dbReference>
<dbReference type="Pfam" id="PF02926">
    <property type="entry name" value="THUMP"/>
    <property type="match status" value="1"/>
</dbReference>
<dbReference type="SMART" id="SM00981">
    <property type="entry name" value="THUMP"/>
    <property type="match status" value="1"/>
</dbReference>
<dbReference type="SUPFAM" id="SSF52402">
    <property type="entry name" value="Adenine nucleotide alpha hydrolases-like"/>
    <property type="match status" value="1"/>
</dbReference>
<dbReference type="SUPFAM" id="SSF52821">
    <property type="entry name" value="Rhodanese/Cell cycle control phosphatase"/>
    <property type="match status" value="1"/>
</dbReference>
<dbReference type="SUPFAM" id="SSF143437">
    <property type="entry name" value="THUMP domain-like"/>
    <property type="match status" value="1"/>
</dbReference>
<dbReference type="PROSITE" id="PS51165">
    <property type="entry name" value="THUMP"/>
    <property type="match status" value="1"/>
</dbReference>
<name>THII_SACD2</name>
<feature type="chain" id="PRO_1000074256" description="tRNA sulfurtransferase">
    <location>
        <begin position="1"/>
        <end position="483"/>
    </location>
</feature>
<feature type="domain" description="THUMP" evidence="1">
    <location>
        <begin position="63"/>
        <end position="167"/>
    </location>
</feature>
<feature type="domain" description="Rhodanese" evidence="1">
    <location>
        <begin position="405"/>
        <end position="483"/>
    </location>
</feature>
<feature type="active site" description="Cysteine persulfide intermediate" evidence="1">
    <location>
        <position position="457"/>
    </location>
</feature>
<feature type="binding site" evidence="1">
    <location>
        <begin position="185"/>
        <end position="186"/>
    </location>
    <ligand>
        <name>ATP</name>
        <dbReference type="ChEBI" id="CHEBI:30616"/>
    </ligand>
</feature>
<feature type="binding site" evidence="1">
    <location>
        <position position="267"/>
    </location>
    <ligand>
        <name>ATP</name>
        <dbReference type="ChEBI" id="CHEBI:30616"/>
    </ligand>
</feature>
<feature type="binding site" evidence="1">
    <location>
        <position position="289"/>
    </location>
    <ligand>
        <name>ATP</name>
        <dbReference type="ChEBI" id="CHEBI:30616"/>
    </ligand>
</feature>
<feature type="binding site" evidence="1">
    <location>
        <position position="298"/>
    </location>
    <ligand>
        <name>ATP</name>
        <dbReference type="ChEBI" id="CHEBI:30616"/>
    </ligand>
</feature>
<feature type="disulfide bond" description="Redox-active" evidence="1">
    <location>
        <begin position="346"/>
        <end position="457"/>
    </location>
</feature>
<evidence type="ECO:0000255" key="1">
    <source>
        <dbReference type="HAMAP-Rule" id="MF_00021"/>
    </source>
</evidence>
<organism>
    <name type="scientific">Saccharophagus degradans (strain 2-40 / ATCC 43961 / DSM 17024)</name>
    <dbReference type="NCBI Taxonomy" id="203122"/>
    <lineage>
        <taxon>Bacteria</taxon>
        <taxon>Pseudomonadati</taxon>
        <taxon>Pseudomonadota</taxon>
        <taxon>Gammaproteobacteria</taxon>
        <taxon>Cellvibrionales</taxon>
        <taxon>Cellvibrionaceae</taxon>
        <taxon>Saccharophagus</taxon>
    </lineage>
</organism>
<keyword id="KW-0067">ATP-binding</keyword>
<keyword id="KW-0963">Cytoplasm</keyword>
<keyword id="KW-1015">Disulfide bond</keyword>
<keyword id="KW-0547">Nucleotide-binding</keyword>
<keyword id="KW-0676">Redox-active center</keyword>
<keyword id="KW-1185">Reference proteome</keyword>
<keyword id="KW-0694">RNA-binding</keyword>
<keyword id="KW-0784">Thiamine biosynthesis</keyword>
<keyword id="KW-0808">Transferase</keyword>
<keyword id="KW-0820">tRNA-binding</keyword>